<name>YR358_MIMIV</name>
<organism>
    <name type="scientific">Acanthamoeba polyphaga mimivirus</name>
    <name type="common">APMV</name>
    <dbReference type="NCBI Taxonomy" id="212035"/>
    <lineage>
        <taxon>Viruses</taxon>
        <taxon>Varidnaviria</taxon>
        <taxon>Bamfordvirae</taxon>
        <taxon>Nucleocytoviricota</taxon>
        <taxon>Megaviricetes</taxon>
        <taxon>Imitervirales</taxon>
        <taxon>Mimiviridae</taxon>
        <taxon>Megamimivirinae</taxon>
        <taxon>Mimivirus</taxon>
        <taxon>Mimivirus bradfordmassiliense</taxon>
    </lineage>
</organism>
<proteinExistence type="predicted"/>
<dbReference type="EMBL" id="AY653733">
    <property type="protein sequence ID" value="AAV50627.1"/>
    <property type="molecule type" value="Genomic_DNA"/>
</dbReference>
<dbReference type="KEGG" id="vg:9924978"/>
<dbReference type="OrthoDB" id="32749at10239"/>
<dbReference type="Proteomes" id="UP000001134">
    <property type="component" value="Genome"/>
</dbReference>
<organismHost>
    <name type="scientific">Acanthamoeba polyphaga</name>
    <name type="common">Amoeba</name>
    <dbReference type="NCBI Taxonomy" id="5757"/>
</organismHost>
<protein>
    <recommendedName>
        <fullName>Uncharacterized protein R358</fullName>
    </recommendedName>
</protein>
<sequence length="280" mass="32966">MNIFIRKHMIPYLSEYTQMFIVLFGAKVVVCDDTYNFQQFLEHKNNLNLFYKTFPPHIENAIPQILQHNIKIYLVNIDQLGWRNLNTVKKALSNKIKVIDYSSENISLTKDINHVHIPLLLYNDIIIRDNLEIKYDIGFSGGDFPRRSTILKQLSNKYNVININKFGKKRDILTKQCRIVLNIHAFDSLSTTETLRCYPLIYNKILTVSENTPLIESSTYGTEINKFIVFVDYDKIVSKCEEILSNYDQYYNSVFKDFDETKIKHMVDNHIETINQNIFN</sequence>
<feature type="chain" id="PRO_0000247396" description="Uncharacterized protein R358">
    <location>
        <begin position="1"/>
        <end position="280"/>
    </location>
</feature>
<accession>Q5UQU7</accession>
<gene>
    <name type="ordered locus">MIMI_R358</name>
</gene>
<keyword id="KW-1185">Reference proteome</keyword>
<reference key="1">
    <citation type="journal article" date="2004" name="Science">
        <title>The 1.2-megabase genome sequence of Mimivirus.</title>
        <authorList>
            <person name="Raoult D."/>
            <person name="Audic S."/>
            <person name="Robert C."/>
            <person name="Abergel C."/>
            <person name="Renesto P."/>
            <person name="Ogata H."/>
            <person name="La Scola B."/>
            <person name="Susan M."/>
            <person name="Claverie J.-M."/>
        </authorList>
    </citation>
    <scope>NUCLEOTIDE SEQUENCE [LARGE SCALE GENOMIC DNA]</scope>
    <source>
        <strain>Rowbotham-Bradford</strain>
    </source>
</reference>